<keyword id="KW-0002">3D-structure</keyword>
<keyword id="KW-0028">Amino-acid biosynthesis</keyword>
<keyword id="KW-0057">Aromatic amino acid biosynthesis</keyword>
<keyword id="KW-0903">Direct protein sequencing</keyword>
<keyword id="KW-0456">Lyase</keyword>
<keyword id="KW-1185">Reference proteome</keyword>
<keyword id="KW-0822">Tryptophan biosynthesis</keyword>
<protein>
    <recommendedName>
        <fullName evidence="1">Tryptophan synthase alpha chain</fullName>
        <ecNumber evidence="1">4.2.1.20</ecNumber>
    </recommendedName>
</protein>
<reference key="1">
    <citation type="journal article" date="2002" name="FEMS Microbiol. Lett.">
        <title>Overexpression in Escherichia coli of the AT-rich trpA and trpB genes from the hyperthermophilic archaeon Pyrococcus furiosus.</title>
        <authorList>
            <person name="Ishida M."/>
            <person name="Oshima T."/>
            <person name="Yutani K."/>
        </authorList>
    </citation>
    <scope>NUCLEOTIDE SEQUENCE [GENOMIC DNA]</scope>
    <scope>PROTEIN SEQUENCE OF 1-10</scope>
    <source>
        <strain>ATCC 43587 / DSM 3638 / JCM 8422 / Vc1</strain>
    </source>
</reference>
<reference key="2">
    <citation type="journal article" date="1999" name="Genetics">
        <title>Divergence of the hyperthermophilic archaea Pyrococcus furiosus and P. horikoshii inferred from complete genomic sequences.</title>
        <authorList>
            <person name="Maeder D.L."/>
            <person name="Weiss R.B."/>
            <person name="Dunn D.M."/>
            <person name="Cherry J.L."/>
            <person name="Gonzalez J.M."/>
            <person name="DiRuggiero J."/>
            <person name="Robb F.T."/>
        </authorList>
    </citation>
    <scope>NUCLEOTIDE SEQUENCE [LARGE SCALE GENOMIC DNA]</scope>
    <source>
        <strain>ATCC 43587 / DSM 3638 / JCM 8422 / Vc1</strain>
    </source>
</reference>
<reference key="3">
    <citation type="submission" date="2007-10" db="PDB data bank">
        <title>Structures of mutant tryptophan synthase alpha-subunits from a hyperthermophile, Pyrococcus furiosus.</title>
        <authorList>
            <consortium name="RIKEN structural genomics initiative (RSGI)"/>
        </authorList>
    </citation>
    <scope>X-RAY CRYSTALLOGRAPHY (2.4 ANGSTROMS)</scope>
</reference>
<name>TRPA_PYRFU</name>
<organism>
    <name type="scientific">Pyrococcus furiosus (strain ATCC 43587 / DSM 3638 / JCM 8422 / Vc1)</name>
    <dbReference type="NCBI Taxonomy" id="186497"/>
    <lineage>
        <taxon>Archaea</taxon>
        <taxon>Methanobacteriati</taxon>
        <taxon>Methanobacteriota</taxon>
        <taxon>Thermococci</taxon>
        <taxon>Thermococcales</taxon>
        <taxon>Thermococcaceae</taxon>
        <taxon>Pyrococcus</taxon>
    </lineage>
</organism>
<proteinExistence type="evidence at protein level"/>
<feature type="chain" id="PRO_0000098897" description="Tryptophan synthase alpha chain">
    <location>
        <begin position="1"/>
        <end position="248"/>
    </location>
</feature>
<feature type="active site" description="Proton acceptor">
    <location>
        <position position="36"/>
    </location>
</feature>
<feature type="active site" description="Proton acceptor">
    <location>
        <position position="47"/>
    </location>
</feature>
<feature type="strand" evidence="2">
    <location>
        <begin position="6"/>
        <end position="12"/>
    </location>
</feature>
<feature type="helix" evidence="2">
    <location>
        <begin position="18"/>
        <end position="28"/>
    </location>
</feature>
<feature type="helix" evidence="2">
    <location>
        <begin position="29"/>
        <end position="31"/>
    </location>
</feature>
<feature type="strand" evidence="2">
    <location>
        <begin position="35"/>
        <end position="38"/>
    </location>
</feature>
<feature type="helix" evidence="2">
    <location>
        <begin position="49"/>
        <end position="60"/>
    </location>
</feature>
<feature type="helix" evidence="2">
    <location>
        <begin position="65"/>
        <end position="76"/>
    </location>
</feature>
<feature type="strand" evidence="2">
    <location>
        <begin position="83"/>
        <end position="87"/>
    </location>
</feature>
<feature type="helix" evidence="2">
    <location>
        <begin position="89"/>
        <end position="95"/>
    </location>
</feature>
<feature type="helix" evidence="2">
    <location>
        <begin position="97"/>
        <end position="107"/>
    </location>
</feature>
<feature type="strand" evidence="2">
    <location>
        <begin position="111"/>
        <end position="114"/>
    </location>
</feature>
<feature type="helix" evidence="2">
    <location>
        <begin position="119"/>
        <end position="121"/>
    </location>
</feature>
<feature type="helix" evidence="2">
    <location>
        <begin position="122"/>
        <end position="132"/>
    </location>
</feature>
<feature type="strand" evidence="2">
    <location>
        <begin position="135"/>
        <end position="140"/>
    </location>
</feature>
<feature type="helix" evidence="2">
    <location>
        <begin position="146"/>
        <end position="155"/>
    </location>
</feature>
<feature type="strand" evidence="2">
    <location>
        <begin position="157"/>
        <end position="163"/>
    </location>
</feature>
<feature type="helix" evidence="2">
    <location>
        <begin position="177"/>
        <end position="189"/>
    </location>
</feature>
<feature type="strand" evidence="2">
    <location>
        <begin position="194"/>
        <end position="198"/>
    </location>
</feature>
<feature type="helix" evidence="2">
    <location>
        <begin position="203"/>
        <end position="211"/>
    </location>
</feature>
<feature type="strand" evidence="2">
    <location>
        <begin position="215"/>
        <end position="219"/>
    </location>
</feature>
<feature type="helix" evidence="2">
    <location>
        <begin position="221"/>
        <end position="230"/>
    </location>
</feature>
<feature type="helix" evidence="2">
    <location>
        <begin position="231"/>
        <end position="233"/>
    </location>
</feature>
<feature type="helix" evidence="2">
    <location>
        <begin position="235"/>
        <end position="246"/>
    </location>
</feature>
<gene>
    <name evidence="1" type="primary">trpA</name>
    <name type="ordered locus">PF1705</name>
</gene>
<accession>Q8U094</accession>
<sequence>MFKDGSLIPYLTAGDPDKQSTLNFLLALDEYAGAIELGIPFSDPIADGKTIQESHYRALKNGFKLREAFWIVKEFRRHSSTPIVLMTYYNPIYRAGVRNFLAEAKASGVDGILVVDLPVFHAKEFTEIAREEGIKTVFLAAPNTPDERLKVIDDMTTGFVYLVSLYGTTGAREEIPKTAYDLLRRAKRICRNKVAVGFGVSKREHVVSLLKEGANGVVVGSALVKIIGEKGREATEFLKKKVEELLGI</sequence>
<comment type="function">
    <text>The alpha subunit is responsible for the aldol cleavage of indoleglycerol phosphate to indole and glyceraldehyde 3-phosphate.</text>
</comment>
<comment type="catalytic activity">
    <reaction evidence="1">
        <text>(1S,2R)-1-C-(indol-3-yl)glycerol 3-phosphate + L-serine = D-glyceraldehyde 3-phosphate + L-tryptophan + H2O</text>
        <dbReference type="Rhea" id="RHEA:10532"/>
        <dbReference type="ChEBI" id="CHEBI:15377"/>
        <dbReference type="ChEBI" id="CHEBI:33384"/>
        <dbReference type="ChEBI" id="CHEBI:57912"/>
        <dbReference type="ChEBI" id="CHEBI:58866"/>
        <dbReference type="ChEBI" id="CHEBI:59776"/>
        <dbReference type="EC" id="4.2.1.20"/>
    </reaction>
</comment>
<comment type="pathway">
    <text evidence="1">Amino-acid biosynthesis; L-tryptophan biosynthesis; L-tryptophan from chorismate: step 5/5.</text>
</comment>
<comment type="subunit">
    <text evidence="1">Tetramer of two alpha and two beta chains.</text>
</comment>
<comment type="similarity">
    <text evidence="1">Belongs to the TrpA family.</text>
</comment>
<evidence type="ECO:0000255" key="1">
    <source>
        <dbReference type="HAMAP-Rule" id="MF_00131"/>
    </source>
</evidence>
<evidence type="ECO:0007829" key="2">
    <source>
        <dbReference type="PDB" id="1GEQ"/>
    </source>
</evidence>
<dbReference type="EC" id="4.2.1.20" evidence="1"/>
<dbReference type="EMBL" id="AB080770">
    <property type="protein sequence ID" value="BAC11856.1"/>
    <property type="molecule type" value="Genomic_DNA"/>
</dbReference>
<dbReference type="EMBL" id="AE009950">
    <property type="protein sequence ID" value="AAL81829.1"/>
    <property type="molecule type" value="Genomic_DNA"/>
</dbReference>
<dbReference type="RefSeq" id="WP_011012851.1">
    <property type="nucleotide sequence ID" value="NZ_CP023154.1"/>
</dbReference>
<dbReference type="PDB" id="1GEQ">
    <property type="method" value="X-ray"/>
    <property type="resolution" value="2.00 A"/>
    <property type="chains" value="A/B=1-248"/>
</dbReference>
<dbReference type="PDB" id="1WDW">
    <property type="method" value="X-ray"/>
    <property type="resolution" value="3.00 A"/>
    <property type="chains" value="A/C/E/G/I/K=1-248"/>
</dbReference>
<dbReference type="PDB" id="2DZP">
    <property type="method" value="X-ray"/>
    <property type="resolution" value="2.40 A"/>
    <property type="chains" value="A/B=1-248"/>
</dbReference>
<dbReference type="PDB" id="2DZS">
    <property type="method" value="X-ray"/>
    <property type="resolution" value="2.40 A"/>
    <property type="chains" value="A/B=1-248"/>
</dbReference>
<dbReference type="PDB" id="2DZT">
    <property type="method" value="X-ray"/>
    <property type="resolution" value="2.40 A"/>
    <property type="chains" value="A/B=1-248"/>
</dbReference>
<dbReference type="PDB" id="2DZU">
    <property type="method" value="X-ray"/>
    <property type="resolution" value="2.46 A"/>
    <property type="chains" value="A/B=1-248"/>
</dbReference>
<dbReference type="PDB" id="2DZV">
    <property type="method" value="X-ray"/>
    <property type="resolution" value="2.40 A"/>
    <property type="chains" value="A/B=1-248"/>
</dbReference>
<dbReference type="PDB" id="2DZW">
    <property type="method" value="X-ray"/>
    <property type="resolution" value="2.40 A"/>
    <property type="chains" value="A/B=1-248"/>
</dbReference>
<dbReference type="PDB" id="2DZX">
    <property type="method" value="X-ray"/>
    <property type="resolution" value="2.40 A"/>
    <property type="chains" value="A/B=1-248"/>
</dbReference>
<dbReference type="PDB" id="2E09">
    <property type="method" value="X-ray"/>
    <property type="resolution" value="2.40 A"/>
    <property type="chains" value="A/B=1-248"/>
</dbReference>
<dbReference type="PDB" id="5E0K">
    <property type="method" value="X-ray"/>
    <property type="resolution" value="2.76 A"/>
    <property type="chains" value="A/C/E/G/I/K=1-248"/>
</dbReference>
<dbReference type="PDBsum" id="1GEQ"/>
<dbReference type="PDBsum" id="1WDW"/>
<dbReference type="PDBsum" id="2DZP"/>
<dbReference type="PDBsum" id="2DZS"/>
<dbReference type="PDBsum" id="2DZT"/>
<dbReference type="PDBsum" id="2DZU"/>
<dbReference type="PDBsum" id="2DZV"/>
<dbReference type="PDBsum" id="2DZW"/>
<dbReference type="PDBsum" id="2DZX"/>
<dbReference type="PDBsum" id="2E09"/>
<dbReference type="PDBsum" id="5E0K"/>
<dbReference type="SMR" id="Q8U094"/>
<dbReference type="STRING" id="186497.PF1705"/>
<dbReference type="PaxDb" id="186497-PF1705"/>
<dbReference type="GeneID" id="41713536"/>
<dbReference type="KEGG" id="pfu:PF1705"/>
<dbReference type="PATRIC" id="fig|186497.12.peg.1773"/>
<dbReference type="eggNOG" id="arCOG01086">
    <property type="taxonomic scope" value="Archaea"/>
</dbReference>
<dbReference type="HOGENOM" id="CLU_016734_0_2_2"/>
<dbReference type="OrthoDB" id="25658at2157"/>
<dbReference type="PhylomeDB" id="Q8U094"/>
<dbReference type="BRENDA" id="4.2.1.20">
    <property type="organism ID" value="5243"/>
</dbReference>
<dbReference type="UniPathway" id="UPA00035">
    <property type="reaction ID" value="UER00044"/>
</dbReference>
<dbReference type="EvolutionaryTrace" id="Q8U094"/>
<dbReference type="Proteomes" id="UP000001013">
    <property type="component" value="Chromosome"/>
</dbReference>
<dbReference type="GO" id="GO:0005829">
    <property type="term" value="C:cytosol"/>
    <property type="evidence" value="ECO:0007669"/>
    <property type="project" value="TreeGrafter"/>
</dbReference>
<dbReference type="GO" id="GO:0004834">
    <property type="term" value="F:tryptophan synthase activity"/>
    <property type="evidence" value="ECO:0007669"/>
    <property type="project" value="UniProtKB-UniRule"/>
</dbReference>
<dbReference type="CDD" id="cd04724">
    <property type="entry name" value="Tryptophan_synthase_alpha"/>
    <property type="match status" value="1"/>
</dbReference>
<dbReference type="FunFam" id="3.20.20.70:FF:000037">
    <property type="entry name" value="Tryptophan synthase alpha chain"/>
    <property type="match status" value="1"/>
</dbReference>
<dbReference type="Gene3D" id="3.20.20.70">
    <property type="entry name" value="Aldolase class I"/>
    <property type="match status" value="1"/>
</dbReference>
<dbReference type="HAMAP" id="MF_00131">
    <property type="entry name" value="Trp_synth_alpha"/>
    <property type="match status" value="1"/>
</dbReference>
<dbReference type="InterPro" id="IPR013785">
    <property type="entry name" value="Aldolase_TIM"/>
</dbReference>
<dbReference type="InterPro" id="IPR011060">
    <property type="entry name" value="RibuloseP-bd_barrel"/>
</dbReference>
<dbReference type="InterPro" id="IPR018204">
    <property type="entry name" value="Trp_synthase_alpha_AS"/>
</dbReference>
<dbReference type="InterPro" id="IPR002028">
    <property type="entry name" value="Trp_synthase_suA"/>
</dbReference>
<dbReference type="NCBIfam" id="TIGR00262">
    <property type="entry name" value="trpA"/>
    <property type="match status" value="1"/>
</dbReference>
<dbReference type="PANTHER" id="PTHR43406:SF1">
    <property type="entry name" value="TRYPTOPHAN SYNTHASE ALPHA CHAIN, CHLOROPLASTIC"/>
    <property type="match status" value="1"/>
</dbReference>
<dbReference type="PANTHER" id="PTHR43406">
    <property type="entry name" value="TRYPTOPHAN SYNTHASE, ALPHA CHAIN"/>
    <property type="match status" value="1"/>
</dbReference>
<dbReference type="Pfam" id="PF00290">
    <property type="entry name" value="Trp_syntA"/>
    <property type="match status" value="1"/>
</dbReference>
<dbReference type="SUPFAM" id="SSF51366">
    <property type="entry name" value="Ribulose-phoshate binding barrel"/>
    <property type="match status" value="1"/>
</dbReference>
<dbReference type="PROSITE" id="PS00167">
    <property type="entry name" value="TRP_SYNTHASE_ALPHA"/>
    <property type="match status" value="1"/>
</dbReference>